<name>YCIB_HAEDU</name>
<protein>
    <recommendedName>
        <fullName evidence="1">Inner membrane-spanning protein YciB</fullName>
    </recommendedName>
</protein>
<comment type="function">
    <text evidence="1">Plays a role in cell envelope biogenesis, maintenance of cell envelope integrity and membrane homeostasis.</text>
</comment>
<comment type="subcellular location">
    <subcellularLocation>
        <location evidence="1">Cell inner membrane</location>
        <topology evidence="1">Multi-pass membrane protein</topology>
    </subcellularLocation>
</comment>
<comment type="similarity">
    <text evidence="1">Belongs to the YciB family.</text>
</comment>
<feature type="chain" id="PRO_0000206534" description="Inner membrane-spanning protein YciB">
    <location>
        <begin position="1"/>
        <end position="183"/>
    </location>
</feature>
<feature type="transmembrane region" description="Helical" evidence="1">
    <location>
        <begin position="22"/>
        <end position="44"/>
    </location>
</feature>
<feature type="transmembrane region" description="Helical" evidence="1">
    <location>
        <begin position="53"/>
        <end position="73"/>
    </location>
</feature>
<feature type="transmembrane region" description="Helical" evidence="1">
    <location>
        <begin position="76"/>
        <end position="96"/>
    </location>
</feature>
<feature type="transmembrane region" description="Helical" evidence="1">
    <location>
        <begin position="121"/>
        <end position="141"/>
    </location>
</feature>
<feature type="transmembrane region" description="Helical" evidence="1">
    <location>
        <begin position="153"/>
        <end position="173"/>
    </location>
</feature>
<organism>
    <name type="scientific">Haemophilus ducreyi (strain 35000HP / ATCC 700724)</name>
    <dbReference type="NCBI Taxonomy" id="233412"/>
    <lineage>
        <taxon>Bacteria</taxon>
        <taxon>Pseudomonadati</taxon>
        <taxon>Pseudomonadota</taxon>
        <taxon>Gammaproteobacteria</taxon>
        <taxon>Pasteurellales</taxon>
        <taxon>Pasteurellaceae</taxon>
        <taxon>Haemophilus</taxon>
    </lineage>
</organism>
<accession>Q7VKZ1</accession>
<sequence length="183" mass="20879">MKQLLEFIPLILFFAVYKLVGVQAAAITLVLATILQLILVRILFKKLETSQWIVGLSVIIFGILTAYFDDLAFLKWKVTIINGLFAAVLLISQYVFHKPVVKMLLAKELSLPTQVWNRLNLGWAIFFIICMLINIIISQLFSDDTWATFKTFGFTGLSLVAVIITGIYLYPYIKKLENNNEQK</sequence>
<gene>
    <name evidence="1" type="primary">yciB</name>
    <name type="ordered locus">HD_1712</name>
</gene>
<reference key="1">
    <citation type="submission" date="2003-06" db="EMBL/GenBank/DDBJ databases">
        <title>The complete genome sequence of Haemophilus ducreyi.</title>
        <authorList>
            <person name="Munson R.S. Jr."/>
            <person name="Ray W.C."/>
            <person name="Mahairas G."/>
            <person name="Sabo P."/>
            <person name="Mungur R."/>
            <person name="Johnson L."/>
            <person name="Nguyen D."/>
            <person name="Wang J."/>
            <person name="Forst C."/>
            <person name="Hood L."/>
        </authorList>
    </citation>
    <scope>NUCLEOTIDE SEQUENCE [LARGE SCALE GENOMIC DNA]</scope>
    <source>
        <strain>35000HP / ATCC 700724</strain>
    </source>
</reference>
<keyword id="KW-0997">Cell inner membrane</keyword>
<keyword id="KW-1003">Cell membrane</keyword>
<keyword id="KW-0472">Membrane</keyword>
<keyword id="KW-1185">Reference proteome</keyword>
<keyword id="KW-0812">Transmembrane</keyword>
<keyword id="KW-1133">Transmembrane helix</keyword>
<dbReference type="EMBL" id="AE017143">
    <property type="protein sequence ID" value="AAP96472.1"/>
    <property type="molecule type" value="Genomic_DNA"/>
</dbReference>
<dbReference type="RefSeq" id="WP_010945501.1">
    <property type="nucleotide sequence ID" value="NC_002940.2"/>
</dbReference>
<dbReference type="STRING" id="233412.HD_1712"/>
<dbReference type="KEGG" id="hdu:HD_1712"/>
<dbReference type="eggNOG" id="COG2917">
    <property type="taxonomic scope" value="Bacteria"/>
</dbReference>
<dbReference type="HOGENOM" id="CLU_089554_2_0_6"/>
<dbReference type="OrthoDB" id="9788219at2"/>
<dbReference type="Proteomes" id="UP000001022">
    <property type="component" value="Chromosome"/>
</dbReference>
<dbReference type="GO" id="GO:0005886">
    <property type="term" value="C:plasma membrane"/>
    <property type="evidence" value="ECO:0007669"/>
    <property type="project" value="UniProtKB-SubCell"/>
</dbReference>
<dbReference type="HAMAP" id="MF_00189">
    <property type="entry name" value="YciB"/>
    <property type="match status" value="1"/>
</dbReference>
<dbReference type="InterPro" id="IPR006008">
    <property type="entry name" value="YciB"/>
</dbReference>
<dbReference type="NCBIfam" id="TIGR00997">
    <property type="entry name" value="ispZ"/>
    <property type="match status" value="1"/>
</dbReference>
<dbReference type="NCBIfam" id="NF001324">
    <property type="entry name" value="PRK00259.1-2"/>
    <property type="match status" value="1"/>
</dbReference>
<dbReference type="PANTHER" id="PTHR36917:SF1">
    <property type="entry name" value="INNER MEMBRANE-SPANNING PROTEIN YCIB"/>
    <property type="match status" value="1"/>
</dbReference>
<dbReference type="PANTHER" id="PTHR36917">
    <property type="entry name" value="INTRACELLULAR SEPTATION PROTEIN A-RELATED"/>
    <property type="match status" value="1"/>
</dbReference>
<dbReference type="Pfam" id="PF04279">
    <property type="entry name" value="IspA"/>
    <property type="match status" value="1"/>
</dbReference>
<proteinExistence type="inferred from homology"/>
<evidence type="ECO:0000255" key="1">
    <source>
        <dbReference type="HAMAP-Rule" id="MF_00189"/>
    </source>
</evidence>